<protein>
    <recommendedName>
        <fullName evidence="1">NADPH-dependent 7-cyano-7-deazaguanine reductase</fullName>
        <ecNumber evidence="1">1.7.1.13</ecNumber>
    </recommendedName>
    <alternativeName>
        <fullName evidence="1">7-cyano-7-carbaguanine reductase</fullName>
    </alternativeName>
    <alternativeName>
        <fullName evidence="1">NADPH-dependent nitrile oxidoreductase</fullName>
    </alternativeName>
    <alternativeName>
        <fullName evidence="1">PreQ(0) reductase</fullName>
    </alternativeName>
</protein>
<keyword id="KW-0963">Cytoplasm</keyword>
<keyword id="KW-0521">NADP</keyword>
<keyword id="KW-0560">Oxidoreductase</keyword>
<keyword id="KW-0671">Queuosine biosynthesis</keyword>
<organism>
    <name type="scientific">Escherichia coli O6:K15:H31 (strain 536 / UPEC)</name>
    <dbReference type="NCBI Taxonomy" id="362663"/>
    <lineage>
        <taxon>Bacteria</taxon>
        <taxon>Pseudomonadati</taxon>
        <taxon>Pseudomonadota</taxon>
        <taxon>Gammaproteobacteria</taxon>
        <taxon>Enterobacterales</taxon>
        <taxon>Enterobacteriaceae</taxon>
        <taxon>Escherichia</taxon>
    </lineage>
</organism>
<gene>
    <name evidence="1" type="primary">queF</name>
    <name type="ordered locus">ECP_2776</name>
</gene>
<proteinExistence type="inferred from homology"/>
<reference key="1">
    <citation type="journal article" date="2006" name="Mol. Microbiol.">
        <title>Role of pathogenicity island-associated integrases in the genome plasticity of uropathogenic Escherichia coli strain 536.</title>
        <authorList>
            <person name="Hochhut B."/>
            <person name="Wilde C."/>
            <person name="Balling G."/>
            <person name="Middendorf B."/>
            <person name="Dobrindt U."/>
            <person name="Brzuszkiewicz E."/>
            <person name="Gottschalk G."/>
            <person name="Carniel E."/>
            <person name="Hacker J."/>
        </authorList>
    </citation>
    <scope>NUCLEOTIDE SEQUENCE [LARGE SCALE GENOMIC DNA]</scope>
    <source>
        <strain>536 / UPEC</strain>
    </source>
</reference>
<evidence type="ECO:0000255" key="1">
    <source>
        <dbReference type="HAMAP-Rule" id="MF_00817"/>
    </source>
</evidence>
<comment type="function">
    <text evidence="1">Catalyzes the NADPH-dependent reduction of 7-cyano-7-deazaguanine (preQ0) to 7-aminomethyl-7-deazaguanine (preQ1).</text>
</comment>
<comment type="catalytic activity">
    <reaction evidence="1">
        <text>7-aminomethyl-7-carbaguanine + 2 NADP(+) = 7-cyano-7-deazaguanine + 2 NADPH + 3 H(+)</text>
        <dbReference type="Rhea" id="RHEA:13409"/>
        <dbReference type="ChEBI" id="CHEBI:15378"/>
        <dbReference type="ChEBI" id="CHEBI:45075"/>
        <dbReference type="ChEBI" id="CHEBI:57783"/>
        <dbReference type="ChEBI" id="CHEBI:58349"/>
        <dbReference type="ChEBI" id="CHEBI:58703"/>
        <dbReference type="EC" id="1.7.1.13"/>
    </reaction>
</comment>
<comment type="pathway">
    <text evidence="1">tRNA modification; tRNA-queuosine biosynthesis.</text>
</comment>
<comment type="subunit">
    <text evidence="1">Homodimer.</text>
</comment>
<comment type="subcellular location">
    <subcellularLocation>
        <location evidence="1">Cytoplasm</location>
    </subcellularLocation>
</comment>
<comment type="similarity">
    <text evidence="1">Belongs to the GTP cyclohydrolase I family. QueF type 2 subfamily.</text>
</comment>
<dbReference type="EC" id="1.7.1.13" evidence="1"/>
<dbReference type="EMBL" id="CP000247">
    <property type="protein sequence ID" value="ABG70765.1"/>
    <property type="molecule type" value="Genomic_DNA"/>
</dbReference>
<dbReference type="RefSeq" id="WP_000100429.1">
    <property type="nucleotide sequence ID" value="NC_008253.1"/>
</dbReference>
<dbReference type="SMR" id="Q0TE64"/>
<dbReference type="KEGG" id="ecp:ECP_2776"/>
<dbReference type="HOGENOM" id="CLU_054738_0_0_6"/>
<dbReference type="UniPathway" id="UPA00392"/>
<dbReference type="Proteomes" id="UP000009182">
    <property type="component" value="Chromosome"/>
</dbReference>
<dbReference type="GO" id="GO:0005737">
    <property type="term" value="C:cytoplasm"/>
    <property type="evidence" value="ECO:0007669"/>
    <property type="project" value="UniProtKB-SubCell"/>
</dbReference>
<dbReference type="GO" id="GO:0033739">
    <property type="term" value="F:preQ1 synthase activity"/>
    <property type="evidence" value="ECO:0007669"/>
    <property type="project" value="UniProtKB-UniRule"/>
</dbReference>
<dbReference type="GO" id="GO:0008616">
    <property type="term" value="P:queuosine biosynthetic process"/>
    <property type="evidence" value="ECO:0007669"/>
    <property type="project" value="UniProtKB-UniRule"/>
</dbReference>
<dbReference type="GO" id="GO:0006400">
    <property type="term" value="P:tRNA modification"/>
    <property type="evidence" value="ECO:0007669"/>
    <property type="project" value="UniProtKB-UniRule"/>
</dbReference>
<dbReference type="FunFam" id="3.30.1130.10:FF:000004">
    <property type="entry name" value="NADPH-dependent 7-cyano-7-deazaguanine reductase"/>
    <property type="match status" value="1"/>
</dbReference>
<dbReference type="FunFam" id="3.30.1130.10:FF:000006">
    <property type="entry name" value="NADPH-dependent 7-cyano-7-deazaguanine reductase"/>
    <property type="match status" value="1"/>
</dbReference>
<dbReference type="Gene3D" id="3.30.1130.10">
    <property type="match status" value="2"/>
</dbReference>
<dbReference type="HAMAP" id="MF_00817">
    <property type="entry name" value="QueF_type2"/>
    <property type="match status" value="1"/>
</dbReference>
<dbReference type="InterPro" id="IPR043133">
    <property type="entry name" value="GTP-CH-I_C/QueF"/>
</dbReference>
<dbReference type="InterPro" id="IPR050084">
    <property type="entry name" value="NADPH_dep_7-cyano-7-deazaG_red"/>
</dbReference>
<dbReference type="InterPro" id="IPR029500">
    <property type="entry name" value="QueF"/>
</dbReference>
<dbReference type="InterPro" id="IPR029139">
    <property type="entry name" value="QueF_N"/>
</dbReference>
<dbReference type="InterPro" id="IPR016428">
    <property type="entry name" value="QueF_type2"/>
</dbReference>
<dbReference type="NCBIfam" id="TIGR03138">
    <property type="entry name" value="QueF"/>
    <property type="match status" value="1"/>
</dbReference>
<dbReference type="PANTHER" id="PTHR34354">
    <property type="entry name" value="NADPH-DEPENDENT 7-CYANO-7-DEAZAGUANINE REDUCTASE"/>
    <property type="match status" value="1"/>
</dbReference>
<dbReference type="PANTHER" id="PTHR34354:SF1">
    <property type="entry name" value="NADPH-DEPENDENT 7-CYANO-7-DEAZAGUANINE REDUCTASE"/>
    <property type="match status" value="1"/>
</dbReference>
<dbReference type="Pfam" id="PF14489">
    <property type="entry name" value="QueF"/>
    <property type="match status" value="1"/>
</dbReference>
<dbReference type="Pfam" id="PF14819">
    <property type="entry name" value="QueF_N"/>
    <property type="match status" value="1"/>
</dbReference>
<dbReference type="PIRSF" id="PIRSF004750">
    <property type="entry name" value="Nitrile_oxidored_YqcD_prd"/>
    <property type="match status" value="1"/>
</dbReference>
<dbReference type="SUPFAM" id="SSF55620">
    <property type="entry name" value="Tetrahydrobiopterin biosynthesis enzymes-like"/>
    <property type="match status" value="1"/>
</dbReference>
<feature type="chain" id="PRO_1000062341" description="NADPH-dependent 7-cyano-7-deazaguanine reductase">
    <location>
        <begin position="1"/>
        <end position="282"/>
    </location>
</feature>
<feature type="active site" description="Thioimide intermediate" evidence="1">
    <location>
        <position position="190"/>
    </location>
</feature>
<feature type="active site" description="Proton donor" evidence="1">
    <location>
        <position position="197"/>
    </location>
</feature>
<feature type="binding site" evidence="1">
    <location>
        <begin position="88"/>
        <end position="90"/>
    </location>
    <ligand>
        <name>substrate</name>
    </ligand>
</feature>
<feature type="binding site" evidence="1">
    <location>
        <begin position="90"/>
        <end position="91"/>
    </location>
    <ligand>
        <name>NADPH</name>
        <dbReference type="ChEBI" id="CHEBI:57783"/>
    </ligand>
</feature>
<feature type="binding site" evidence="1">
    <location>
        <begin position="229"/>
        <end position="230"/>
    </location>
    <ligand>
        <name>substrate</name>
    </ligand>
</feature>
<feature type="binding site" evidence="1">
    <location>
        <begin position="258"/>
        <end position="259"/>
    </location>
    <ligand>
        <name>NADPH</name>
        <dbReference type="ChEBI" id="CHEBI:57783"/>
    </ligand>
</feature>
<sequence length="282" mass="32584">MSSYANHQALAGLTLGKSTDYRDTYDASLLQGVPRSLNRDPLGLKADNLPFHGTDIWTLYELSWLNAKGLPQVAVGHVELDYTSVNLIESKSFKLYLNSFNQTRFNNWDEVRQTLERDLSTCAQGKVSVALYRLDELEGQPIGHFNGTCIDDQDITIDNYEFTTDYLENATSGEKVVEETLVSHLLKSNCLITHQPDWGSIQIQYRGRQIDREKLLRYLVSFRHHNEFHEQCVERIFNDLLRFCQPEKLSVYARYTRRGGLDINPWRSNNDFVPSTTRLVRQ</sequence>
<accession>Q0TE64</accession>
<name>QUEF_ECOL5</name>